<feature type="chain" id="PRO_0000222351" description="Protein P">
    <location>
        <begin position="1"/>
        <end position="884"/>
    </location>
</feature>
<feature type="domain" description="Reverse transcriptase" evidence="1">
    <location>
        <begin position="398"/>
        <end position="639"/>
    </location>
</feature>
<feature type="region of interest" description="Terminal protein domain (TP)" evidence="1">
    <location>
        <begin position="1"/>
        <end position="184"/>
    </location>
</feature>
<feature type="region of interest" description="Spacer" evidence="1">
    <location>
        <begin position="185"/>
        <end position="387"/>
    </location>
</feature>
<feature type="region of interest" description="Disordered" evidence="2">
    <location>
        <begin position="299"/>
        <end position="345"/>
    </location>
</feature>
<feature type="region of interest" description="Polymerase/reverse transcriptase domain (RT)" evidence="1">
    <location>
        <begin position="388"/>
        <end position="729"/>
    </location>
</feature>
<feature type="binding site" evidence="1">
    <location>
        <position position="470"/>
    </location>
    <ligand>
        <name>Mg(2+)</name>
        <dbReference type="ChEBI" id="CHEBI:18420"/>
        <note>catalytic</note>
    </ligand>
</feature>
<feature type="binding site" evidence="1">
    <location>
        <position position="590"/>
    </location>
    <ligand>
        <name>Mg(2+)</name>
        <dbReference type="ChEBI" id="CHEBI:18420"/>
        <note>catalytic</note>
    </ligand>
</feature>
<feature type="binding site" evidence="1">
    <location>
        <position position="591"/>
    </location>
    <ligand>
        <name>Mg(2+)</name>
        <dbReference type="ChEBI" id="CHEBI:18420"/>
        <note>catalytic</note>
    </ligand>
</feature>
<feature type="site" description="Priming of reverse-transcription by covalently linking the first nucleotide of the (-)DNA" evidence="1">
    <location>
        <position position="68"/>
    </location>
</feature>
<evidence type="ECO:0000255" key="1">
    <source>
        <dbReference type="HAMAP-Rule" id="MF_04073"/>
    </source>
</evidence>
<evidence type="ECO:0000256" key="2">
    <source>
        <dbReference type="SAM" id="MobiDB-lite"/>
    </source>
</evidence>
<sequence>MHPFSRLFRNIQSLGEEEVQELLGPPEDALPLLAGEDLNHRVADALNLHLPTADLQWVHKTNAITGLYSNQAAQFNPNWIQPEFPELHLHNDLIQKLQQYFGPLTINEKRKLQLNFPARFFPKATKYFPLIKGIKNNYPNFALEHFFATANYLWTLWEAGILYLRKNQTTLTFKGKPYSWEHRQLVQHNGQQHKSHLQSRQNSSMVACSGHLLHNHLSSESVSVSTRNLSNNISDKSQKSTRTGLCSYKQIQTDRLEHLARISCGSKIFIGQQGSSPKTLYKSISSNFRNQTWAYNSSRNSGHTTWFSSASNSNKSRSREKAYSSNSTSKRYSPPLNYEKSDFSSPGVRRRITRLDNNGTPTQCLWRSFYNTKPCGSYCIHHIVSSLDDWGPCTVTGDVTIKSPRTPRRITGGVFLVDKNPNNSSESRLVVDFSQFSRGHTRVHWPKFAVPNLQTLANLLSTNLQWLSLDVSAAFYHIPISPAAVPHLLVGSPGLERFYTCLSSSTHNRNNSQLQTMHNLCTRHVYSSLLLLFKTYGRKLHLLAHPFIMGFRKLPMGVGLSPFLLAQFTSALASMVRRNFPHCVVFAYMDDLVLGARTSEHLTAIYSHICSVFLDLGIHLNVNKTKWWGNHLHFMGYVITSSGVLPQDKHVKKISRYLHSVPVNQPLDYKICERLTGILNYVAPFTLCGYAALMPLYHAIASRMAFIFSSLYKSWLLSLYEELWPVVRQRGVVCTVFADATPTGWGIATTCQLLSGTFAFPLPIATAELIAACLARCWTGARLLGTDNSVVLSGKLTSFPWLLACVAHWILRGTSFCYVPSALNPADLPSRGLLPALRPLPRLRLRPQTSRISLWAASPPVSPRRPVRVAWSSPVQTCEPWIPP</sequence>
<reference key="1">
    <citation type="journal article" date="1989" name="Proc. Natl. Acad. Sci. U.S.A.">
        <title>Complete nucleotide sequence of a molecular clone of woodchuck hepatitis virus that is infectious in the natural host.</title>
        <authorList>
            <person name="Girones R."/>
            <person name="Cote P.J."/>
            <person name="Hornbuckle W.E."/>
            <person name="Tennant B.C."/>
            <person name="Gerin J.L."/>
            <person name="Purcell R.H."/>
            <person name="Miller R.H."/>
        </authorList>
    </citation>
    <scope>NUCLEOTIDE SEQUENCE [GENOMIC DNA]</scope>
</reference>
<reference key="2">
    <citation type="journal article" date="2007" name="World J. Gastroenterol.">
        <title>Hepatitis B virus replication.</title>
        <authorList>
            <person name="Beck J."/>
            <person name="Nassal M."/>
        </authorList>
    </citation>
    <scope>REVIEW</scope>
</reference>
<keyword id="KW-0235">DNA replication</keyword>
<keyword id="KW-0238">DNA-binding</keyword>
<keyword id="KW-0239">DNA-directed DNA polymerase</keyword>
<keyword id="KW-0255">Endonuclease</keyword>
<keyword id="KW-0945">Host-virus interaction</keyword>
<keyword id="KW-0378">Hydrolase</keyword>
<keyword id="KW-1090">Inhibition of host innate immune response by virus</keyword>
<keyword id="KW-1113">Inhibition of host RLR pathway by virus</keyword>
<keyword id="KW-0460">Magnesium</keyword>
<keyword id="KW-0479">Metal-binding</keyword>
<keyword id="KW-0511">Multifunctional enzyme</keyword>
<keyword id="KW-0540">Nuclease</keyword>
<keyword id="KW-0548">Nucleotidyltransferase</keyword>
<keyword id="KW-1185">Reference proteome</keyword>
<keyword id="KW-0695">RNA-directed DNA polymerase</keyword>
<keyword id="KW-0808">Transferase</keyword>
<keyword id="KW-0899">Viral immunoevasion</keyword>
<accession>P17396</accession>
<dbReference type="EC" id="2.7.7.7" evidence="1"/>
<dbReference type="EC" id="2.7.7.49" evidence="1"/>
<dbReference type="EC" id="3.1.26.4" evidence="1"/>
<dbReference type="EMBL" id="J04514">
    <property type="status" value="NOT_ANNOTATED_CDS"/>
    <property type="molecule type" value="Genomic_DNA"/>
</dbReference>
<dbReference type="PIR" id="A32397">
    <property type="entry name" value="JDVLW8"/>
</dbReference>
<dbReference type="Proteomes" id="UP000000287">
    <property type="component" value="Genome"/>
</dbReference>
<dbReference type="GO" id="GO:0003677">
    <property type="term" value="F:DNA binding"/>
    <property type="evidence" value="ECO:0007669"/>
    <property type="project" value="UniProtKB-UniRule"/>
</dbReference>
<dbReference type="GO" id="GO:0003887">
    <property type="term" value="F:DNA-directed DNA polymerase activity"/>
    <property type="evidence" value="ECO:0007669"/>
    <property type="project" value="UniProtKB-UniRule"/>
</dbReference>
<dbReference type="GO" id="GO:0046872">
    <property type="term" value="F:metal ion binding"/>
    <property type="evidence" value="ECO:0007669"/>
    <property type="project" value="UniProtKB-UniRule"/>
</dbReference>
<dbReference type="GO" id="GO:0003964">
    <property type="term" value="F:RNA-directed DNA polymerase activity"/>
    <property type="evidence" value="ECO:0007669"/>
    <property type="project" value="UniProtKB-UniRule"/>
</dbReference>
<dbReference type="GO" id="GO:0004523">
    <property type="term" value="F:RNA-DNA hybrid ribonuclease activity"/>
    <property type="evidence" value="ECO:0007669"/>
    <property type="project" value="UniProtKB-UniRule"/>
</dbReference>
<dbReference type="GO" id="GO:0006260">
    <property type="term" value="P:DNA replication"/>
    <property type="evidence" value="ECO:0007669"/>
    <property type="project" value="UniProtKB-UniRule"/>
</dbReference>
<dbReference type="GO" id="GO:0052170">
    <property type="term" value="P:symbiont-mediated suppression of host innate immune response"/>
    <property type="evidence" value="ECO:0007669"/>
    <property type="project" value="UniProtKB-UniRule"/>
</dbReference>
<dbReference type="Gene3D" id="3.30.70.270">
    <property type="match status" value="1"/>
</dbReference>
<dbReference type="HAMAP" id="MF_04073">
    <property type="entry name" value="HBV_DPOL"/>
    <property type="match status" value="1"/>
</dbReference>
<dbReference type="InterPro" id="IPR043502">
    <property type="entry name" value="DNA/RNA_pol_sf"/>
</dbReference>
<dbReference type="InterPro" id="IPR001462">
    <property type="entry name" value="DNApol_viral_C"/>
</dbReference>
<dbReference type="InterPro" id="IPR000201">
    <property type="entry name" value="DNApol_viral_N"/>
</dbReference>
<dbReference type="InterPro" id="IPR037531">
    <property type="entry name" value="HBV_DPOL"/>
</dbReference>
<dbReference type="InterPro" id="IPR052055">
    <property type="entry name" value="Hepadnavirus_pol/RT"/>
</dbReference>
<dbReference type="InterPro" id="IPR043128">
    <property type="entry name" value="Rev_trsase/Diguanyl_cyclase"/>
</dbReference>
<dbReference type="InterPro" id="IPR000477">
    <property type="entry name" value="RT_dom"/>
</dbReference>
<dbReference type="PANTHER" id="PTHR33050">
    <property type="entry name" value="REVERSE TRANSCRIPTASE DOMAIN-CONTAINING PROTEIN"/>
    <property type="match status" value="1"/>
</dbReference>
<dbReference type="PANTHER" id="PTHR33050:SF7">
    <property type="entry name" value="RIBONUCLEASE H"/>
    <property type="match status" value="1"/>
</dbReference>
<dbReference type="Pfam" id="PF00336">
    <property type="entry name" value="DNA_pol_viral_C"/>
    <property type="match status" value="1"/>
</dbReference>
<dbReference type="Pfam" id="PF00242">
    <property type="entry name" value="DNA_pol_viral_N"/>
    <property type="match status" value="1"/>
</dbReference>
<dbReference type="Pfam" id="PF00078">
    <property type="entry name" value="RVT_1"/>
    <property type="match status" value="1"/>
</dbReference>
<dbReference type="SUPFAM" id="SSF56672">
    <property type="entry name" value="DNA/RNA polymerases"/>
    <property type="match status" value="1"/>
</dbReference>
<dbReference type="PROSITE" id="PS50878">
    <property type="entry name" value="RT_POL"/>
    <property type="match status" value="1"/>
</dbReference>
<organismHost>
    <name type="scientific">Marmota monax</name>
    <name type="common">Woodchuck</name>
    <dbReference type="NCBI Taxonomy" id="9995"/>
</organismHost>
<organism>
    <name type="scientific">Woodchuck hepatitis B virus (isolate 8)</name>
    <name type="common">WHV</name>
    <dbReference type="NCBI Taxonomy" id="10433"/>
    <lineage>
        <taxon>Viruses</taxon>
        <taxon>Riboviria</taxon>
        <taxon>Pararnavirae</taxon>
        <taxon>Artverviricota</taxon>
        <taxon>Revtraviricetes</taxon>
        <taxon>Blubervirales</taxon>
        <taxon>Hepadnaviridae</taxon>
        <taxon>Orthohepadnavirus</taxon>
        <taxon>Woodchuck hepatitis virus</taxon>
    </lineage>
</organism>
<proteinExistence type="inferred from homology"/>
<protein>
    <recommendedName>
        <fullName evidence="1">Protein P</fullName>
    </recommendedName>
    <domain>
        <recommendedName>
            <fullName evidence="1">DNA-directed DNA polymerase</fullName>
            <ecNumber evidence="1">2.7.7.7</ecNumber>
        </recommendedName>
    </domain>
    <domain>
        <recommendedName>
            <fullName evidence="1">RNA-directed DNA polymerase</fullName>
            <ecNumber evidence="1">2.7.7.49</ecNumber>
        </recommendedName>
    </domain>
    <domain>
        <recommendedName>
            <fullName evidence="1">Ribonuclease H</fullName>
            <ecNumber evidence="1">3.1.26.4</ecNumber>
        </recommendedName>
    </domain>
</protein>
<name>DPOL_WHV5</name>
<comment type="function">
    <text evidence="1">Multifunctional enzyme that converts the viral RNA genome into dsDNA in viral cytoplasmic capsids. This enzyme displays a DNA polymerase activity that can copy either DNA or RNA templates, and a ribonuclease H (RNase H) activity that cleaves the RNA strand of RNA-DNA heteroduplexes in a partially processive 3'- to 5'-endonucleasic mode. Neo-synthesized pregenomic RNA (pgRNA) are encapsidated together with the P protein, and reverse-transcribed inside the nucleocapsid. Initiation of reverse-transcription occurs first by binding the epsilon loop on the pgRNA genome, and is initiated by protein priming, thereby the 5'-end of (-)DNA is covalently linked to P protein. Partial (+)DNA is synthesized from the (-)DNA template and generates the relaxed circular DNA (RC-DNA) genome. After budding and infection, the RC-DNA migrates in the nucleus, and is converted into a plasmid-like covalently closed circular DNA (cccDNA). The activity of P protein does not seem to be necessary for cccDNA generation, and is presumably released from (+)DNA by host nuclear DNA repair machinery.</text>
</comment>
<comment type="catalytic activity">
    <reaction evidence="1">
        <text>DNA(n) + a 2'-deoxyribonucleoside 5'-triphosphate = DNA(n+1) + diphosphate</text>
        <dbReference type="Rhea" id="RHEA:22508"/>
        <dbReference type="Rhea" id="RHEA-COMP:17339"/>
        <dbReference type="Rhea" id="RHEA-COMP:17340"/>
        <dbReference type="ChEBI" id="CHEBI:33019"/>
        <dbReference type="ChEBI" id="CHEBI:61560"/>
        <dbReference type="ChEBI" id="CHEBI:173112"/>
        <dbReference type="EC" id="2.7.7.7"/>
    </reaction>
</comment>
<comment type="catalytic activity">
    <reaction evidence="1">
        <text>DNA(n) + a 2'-deoxyribonucleoside 5'-triphosphate = DNA(n+1) + diphosphate</text>
        <dbReference type="Rhea" id="RHEA:22508"/>
        <dbReference type="Rhea" id="RHEA-COMP:17339"/>
        <dbReference type="Rhea" id="RHEA-COMP:17340"/>
        <dbReference type="ChEBI" id="CHEBI:33019"/>
        <dbReference type="ChEBI" id="CHEBI:61560"/>
        <dbReference type="ChEBI" id="CHEBI:173112"/>
        <dbReference type="EC" id="2.7.7.49"/>
    </reaction>
</comment>
<comment type="catalytic activity">
    <reaction evidence="1">
        <text>Endonucleolytic cleavage to 5'-phosphomonoester.</text>
        <dbReference type="EC" id="3.1.26.4"/>
    </reaction>
</comment>
<comment type="activity regulation">
    <text evidence="1">Activated by host HSP70 and HSP40 in vitro to be able to bind the epsilon loop of the pgRNA. Because deletion of the RNase H region renders the protein partly chaperone-independent, the chaperones may be needed indirectly to relieve occlusion of the RNA-binding site by this domain. Inhibited by several reverse-transcriptase inhibitors: Lamivudine, Adefovir and Entecavir.</text>
</comment>
<comment type="domain">
    <text evidence="1">Terminal protein domain (TP) is hepadnavirus-specific. Spacer domain is highly variable and separates the TP and RT domains. Polymerase/reverse-transcriptase domain (RT) and ribonuclease H domain (RH) are similar to retrovirus reverse transcriptase/RNase H.</text>
</comment>
<comment type="domain">
    <text evidence="1">The polymerase/reverse transcriptase (RT) and ribonuclease H (RH) domains are structured in five subdomains: finger, palm, thumb, connection and RNase H. Within the palm subdomain, the 'primer grip' region is thought to be involved in the positioning of the primer terminus for accommodating the incoming nucleotide. The RH domain stabilizes the association of RT with primer-template.</text>
</comment>
<comment type="miscellaneous">
    <text evidence="1">Hepadnaviral virions contain probably just one P protein molecule per particle.</text>
</comment>
<comment type="similarity">
    <text evidence="1">Belongs to the hepadnaviridae P protein family.</text>
</comment>
<gene>
    <name evidence="1" type="primary">P</name>
</gene>